<proteinExistence type="evidence at transcript level"/>
<gene>
    <name type="primary">Tex44</name>
</gene>
<dbReference type="EMBL" id="AK006136">
    <property type="protein sequence ID" value="BAB24427.1"/>
    <property type="molecule type" value="mRNA"/>
</dbReference>
<dbReference type="EMBL" id="BC100497">
    <property type="protein sequence ID" value="AAI00498.1"/>
    <property type="status" value="ALT_INIT"/>
    <property type="molecule type" value="mRNA"/>
</dbReference>
<dbReference type="EMBL" id="BC145753">
    <property type="protein sequence ID" value="AAI45754.1"/>
    <property type="molecule type" value="mRNA"/>
</dbReference>
<dbReference type="CCDS" id="CCDS56635.1"/>
<dbReference type="RefSeq" id="NP_082242.1">
    <property type="nucleotide sequence ID" value="NM_027966.1"/>
</dbReference>
<dbReference type="FunCoup" id="Q9DA60">
    <property type="interactions" value="119"/>
</dbReference>
<dbReference type="STRING" id="10090.ENSMUSP00000136430"/>
<dbReference type="GlyGen" id="Q9DA60">
    <property type="glycosylation" value="1 site"/>
</dbReference>
<dbReference type="PhosphoSitePlus" id="Q9DA60"/>
<dbReference type="PaxDb" id="10090-ENSMUSP00000136430"/>
<dbReference type="ProteomicsDB" id="263288"/>
<dbReference type="Antibodypedia" id="34418">
    <property type="antibodies" value="48 antibodies from 9 providers"/>
</dbReference>
<dbReference type="Ensembl" id="ENSMUST00000046004.6">
    <property type="protein sequence ID" value="ENSMUSP00000136430.2"/>
    <property type="gene ID" value="ENSMUSG00000036574.6"/>
</dbReference>
<dbReference type="GeneID" id="71863"/>
<dbReference type="KEGG" id="mmu:71863"/>
<dbReference type="UCSC" id="uc007bvo.2">
    <property type="organism name" value="mouse"/>
</dbReference>
<dbReference type="AGR" id="MGI:1919113"/>
<dbReference type="CTD" id="165100"/>
<dbReference type="MGI" id="MGI:1919113">
    <property type="gene designation" value="Tex44"/>
</dbReference>
<dbReference type="VEuPathDB" id="HostDB:ENSMUSG00000036574"/>
<dbReference type="eggNOG" id="ENOG502TDPT">
    <property type="taxonomic scope" value="Eukaryota"/>
</dbReference>
<dbReference type="GeneTree" id="ENSGT00390000009950"/>
<dbReference type="HOGENOM" id="CLU_038692_0_0_1"/>
<dbReference type="InParanoid" id="Q9DA60"/>
<dbReference type="OMA" id="MGQDEDQ"/>
<dbReference type="OrthoDB" id="9838056at2759"/>
<dbReference type="PhylomeDB" id="Q9DA60"/>
<dbReference type="TreeFam" id="TF338437"/>
<dbReference type="BioGRID-ORCS" id="71863">
    <property type="hits" value="3 hits in 77 CRISPR screens"/>
</dbReference>
<dbReference type="PRO" id="PR:Q9DA60"/>
<dbReference type="Proteomes" id="UP000000589">
    <property type="component" value="Chromosome 1"/>
</dbReference>
<dbReference type="RNAct" id="Q9DA60">
    <property type="molecule type" value="protein"/>
</dbReference>
<dbReference type="Bgee" id="ENSMUSG00000036574">
    <property type="expression patterns" value="Expressed in seminiferous tubule of testis and 3 other cell types or tissues"/>
</dbReference>
<dbReference type="GO" id="GO:0005737">
    <property type="term" value="C:cytoplasm"/>
    <property type="evidence" value="ECO:0000250"/>
    <property type="project" value="UniProtKB"/>
</dbReference>
<dbReference type="InterPro" id="IPR031460">
    <property type="entry name" value="DUF4678"/>
</dbReference>
<dbReference type="PANTHER" id="PTHR37365">
    <property type="entry name" value="TESTIS-EXPRESSED PROTEIN 44"/>
    <property type="match status" value="1"/>
</dbReference>
<dbReference type="PANTHER" id="PTHR37365:SF1">
    <property type="entry name" value="TESTIS-EXPRESSED PROTEIN 44"/>
    <property type="match status" value="1"/>
</dbReference>
<dbReference type="Pfam" id="PF15727">
    <property type="entry name" value="DUF4678"/>
    <property type="match status" value="1"/>
</dbReference>
<protein>
    <recommendedName>
        <fullName>Testis-expressed protein 44</fullName>
    </recommendedName>
</protein>
<name>TEX44_MOUSE</name>
<comment type="subcellular location">
    <subcellularLocation>
        <location evidence="1">Cytoplasm</location>
    </subcellularLocation>
</comment>
<comment type="sequence caution" evidence="4">
    <conflict type="erroneous initiation">
        <sequence resource="EMBL-CDS" id="AAI00498"/>
    </conflict>
    <text>Truncated N-terminus.</text>
</comment>
<keyword id="KW-0963">Cytoplasm</keyword>
<keyword id="KW-0597">Phosphoprotein</keyword>
<keyword id="KW-1185">Reference proteome</keyword>
<accession>Q9DA60</accession>
<accession>A6H651</accession>
<accession>Q497K4</accession>
<reference key="1">
    <citation type="journal article" date="2005" name="Science">
        <title>The transcriptional landscape of the mammalian genome.</title>
        <authorList>
            <person name="Carninci P."/>
            <person name="Kasukawa T."/>
            <person name="Katayama S."/>
            <person name="Gough J."/>
            <person name="Frith M.C."/>
            <person name="Maeda N."/>
            <person name="Oyama R."/>
            <person name="Ravasi T."/>
            <person name="Lenhard B."/>
            <person name="Wells C."/>
            <person name="Kodzius R."/>
            <person name="Shimokawa K."/>
            <person name="Bajic V.B."/>
            <person name="Brenner S.E."/>
            <person name="Batalov S."/>
            <person name="Forrest A.R."/>
            <person name="Zavolan M."/>
            <person name="Davis M.J."/>
            <person name="Wilming L.G."/>
            <person name="Aidinis V."/>
            <person name="Allen J.E."/>
            <person name="Ambesi-Impiombato A."/>
            <person name="Apweiler R."/>
            <person name="Aturaliya R.N."/>
            <person name="Bailey T.L."/>
            <person name="Bansal M."/>
            <person name="Baxter L."/>
            <person name="Beisel K.W."/>
            <person name="Bersano T."/>
            <person name="Bono H."/>
            <person name="Chalk A.M."/>
            <person name="Chiu K.P."/>
            <person name="Choudhary V."/>
            <person name="Christoffels A."/>
            <person name="Clutterbuck D.R."/>
            <person name="Crowe M.L."/>
            <person name="Dalla E."/>
            <person name="Dalrymple B.P."/>
            <person name="de Bono B."/>
            <person name="Della Gatta G."/>
            <person name="di Bernardo D."/>
            <person name="Down T."/>
            <person name="Engstrom P."/>
            <person name="Fagiolini M."/>
            <person name="Faulkner G."/>
            <person name="Fletcher C.F."/>
            <person name="Fukushima T."/>
            <person name="Furuno M."/>
            <person name="Futaki S."/>
            <person name="Gariboldi M."/>
            <person name="Georgii-Hemming P."/>
            <person name="Gingeras T.R."/>
            <person name="Gojobori T."/>
            <person name="Green R.E."/>
            <person name="Gustincich S."/>
            <person name="Harbers M."/>
            <person name="Hayashi Y."/>
            <person name="Hensch T.K."/>
            <person name="Hirokawa N."/>
            <person name="Hill D."/>
            <person name="Huminiecki L."/>
            <person name="Iacono M."/>
            <person name="Ikeo K."/>
            <person name="Iwama A."/>
            <person name="Ishikawa T."/>
            <person name="Jakt M."/>
            <person name="Kanapin A."/>
            <person name="Katoh M."/>
            <person name="Kawasawa Y."/>
            <person name="Kelso J."/>
            <person name="Kitamura H."/>
            <person name="Kitano H."/>
            <person name="Kollias G."/>
            <person name="Krishnan S.P."/>
            <person name="Kruger A."/>
            <person name="Kummerfeld S.K."/>
            <person name="Kurochkin I.V."/>
            <person name="Lareau L.F."/>
            <person name="Lazarevic D."/>
            <person name="Lipovich L."/>
            <person name="Liu J."/>
            <person name="Liuni S."/>
            <person name="McWilliam S."/>
            <person name="Madan Babu M."/>
            <person name="Madera M."/>
            <person name="Marchionni L."/>
            <person name="Matsuda H."/>
            <person name="Matsuzawa S."/>
            <person name="Miki H."/>
            <person name="Mignone F."/>
            <person name="Miyake S."/>
            <person name="Morris K."/>
            <person name="Mottagui-Tabar S."/>
            <person name="Mulder N."/>
            <person name="Nakano N."/>
            <person name="Nakauchi H."/>
            <person name="Ng P."/>
            <person name="Nilsson R."/>
            <person name="Nishiguchi S."/>
            <person name="Nishikawa S."/>
            <person name="Nori F."/>
            <person name="Ohara O."/>
            <person name="Okazaki Y."/>
            <person name="Orlando V."/>
            <person name="Pang K.C."/>
            <person name="Pavan W.J."/>
            <person name="Pavesi G."/>
            <person name="Pesole G."/>
            <person name="Petrovsky N."/>
            <person name="Piazza S."/>
            <person name="Reed J."/>
            <person name="Reid J.F."/>
            <person name="Ring B.Z."/>
            <person name="Ringwald M."/>
            <person name="Rost B."/>
            <person name="Ruan Y."/>
            <person name="Salzberg S.L."/>
            <person name="Sandelin A."/>
            <person name="Schneider C."/>
            <person name="Schoenbach C."/>
            <person name="Sekiguchi K."/>
            <person name="Semple C.A."/>
            <person name="Seno S."/>
            <person name="Sessa L."/>
            <person name="Sheng Y."/>
            <person name="Shibata Y."/>
            <person name="Shimada H."/>
            <person name="Shimada K."/>
            <person name="Silva D."/>
            <person name="Sinclair B."/>
            <person name="Sperling S."/>
            <person name="Stupka E."/>
            <person name="Sugiura K."/>
            <person name="Sultana R."/>
            <person name="Takenaka Y."/>
            <person name="Taki K."/>
            <person name="Tammoja K."/>
            <person name="Tan S.L."/>
            <person name="Tang S."/>
            <person name="Taylor M.S."/>
            <person name="Tegner J."/>
            <person name="Teichmann S.A."/>
            <person name="Ueda H.R."/>
            <person name="van Nimwegen E."/>
            <person name="Verardo R."/>
            <person name="Wei C.L."/>
            <person name="Yagi K."/>
            <person name="Yamanishi H."/>
            <person name="Zabarovsky E."/>
            <person name="Zhu S."/>
            <person name="Zimmer A."/>
            <person name="Hide W."/>
            <person name="Bult C."/>
            <person name="Grimmond S.M."/>
            <person name="Teasdale R.D."/>
            <person name="Liu E.T."/>
            <person name="Brusic V."/>
            <person name="Quackenbush J."/>
            <person name="Wahlestedt C."/>
            <person name="Mattick J.S."/>
            <person name="Hume D.A."/>
            <person name="Kai C."/>
            <person name="Sasaki D."/>
            <person name="Tomaru Y."/>
            <person name="Fukuda S."/>
            <person name="Kanamori-Katayama M."/>
            <person name="Suzuki M."/>
            <person name="Aoki J."/>
            <person name="Arakawa T."/>
            <person name="Iida J."/>
            <person name="Imamura K."/>
            <person name="Itoh M."/>
            <person name="Kato T."/>
            <person name="Kawaji H."/>
            <person name="Kawagashira N."/>
            <person name="Kawashima T."/>
            <person name="Kojima M."/>
            <person name="Kondo S."/>
            <person name="Konno H."/>
            <person name="Nakano K."/>
            <person name="Ninomiya N."/>
            <person name="Nishio T."/>
            <person name="Okada M."/>
            <person name="Plessy C."/>
            <person name="Shibata K."/>
            <person name="Shiraki T."/>
            <person name="Suzuki S."/>
            <person name="Tagami M."/>
            <person name="Waki K."/>
            <person name="Watahiki A."/>
            <person name="Okamura-Oho Y."/>
            <person name="Suzuki H."/>
            <person name="Kawai J."/>
            <person name="Hayashizaki Y."/>
        </authorList>
    </citation>
    <scope>NUCLEOTIDE SEQUENCE [LARGE SCALE MRNA]</scope>
    <source>
        <strain>C57BL/6J</strain>
        <tissue>Testis</tissue>
    </source>
</reference>
<reference key="2">
    <citation type="journal article" date="2004" name="Genome Res.">
        <title>The status, quality, and expansion of the NIH full-length cDNA project: the Mammalian Gene Collection (MGC).</title>
        <authorList>
            <consortium name="The MGC Project Team"/>
        </authorList>
    </citation>
    <scope>NUCLEOTIDE SEQUENCE [LARGE SCALE MRNA]</scope>
    <source>
        <tissue>Testis</tissue>
    </source>
</reference>
<feature type="chain" id="PRO_0000309183" description="Testis-expressed protein 44">
    <location>
        <begin position="1"/>
        <end position="530"/>
    </location>
</feature>
<feature type="region of interest" description="Disordered" evidence="3">
    <location>
        <begin position="1"/>
        <end position="85"/>
    </location>
</feature>
<feature type="region of interest" description="Disordered" evidence="3">
    <location>
        <begin position="207"/>
        <end position="233"/>
    </location>
</feature>
<feature type="region of interest" description="Disordered" evidence="3">
    <location>
        <begin position="256"/>
        <end position="290"/>
    </location>
</feature>
<feature type="region of interest" description="Disordered" evidence="3">
    <location>
        <begin position="305"/>
        <end position="384"/>
    </location>
</feature>
<feature type="compositionally biased region" description="Acidic residues" evidence="3">
    <location>
        <begin position="1"/>
        <end position="10"/>
    </location>
</feature>
<feature type="compositionally biased region" description="Polar residues" evidence="3">
    <location>
        <begin position="11"/>
        <end position="26"/>
    </location>
</feature>
<feature type="compositionally biased region" description="Polar residues" evidence="3">
    <location>
        <begin position="222"/>
        <end position="233"/>
    </location>
</feature>
<feature type="compositionally biased region" description="Polar residues" evidence="3">
    <location>
        <begin position="257"/>
        <end position="280"/>
    </location>
</feature>
<feature type="compositionally biased region" description="Pro residues" evidence="3">
    <location>
        <begin position="365"/>
        <end position="381"/>
    </location>
</feature>
<feature type="modified residue" description="Phosphoserine" evidence="2">
    <location>
        <position position="468"/>
    </location>
</feature>
<feature type="sequence conflict" description="In Ref. 2; AAI45754." evidence="4" ref="2">
    <original>AY</original>
    <variation>VS</variation>
    <location>
        <begin position="111"/>
        <end position="112"/>
    </location>
</feature>
<feature type="sequence conflict" description="In Ref. 2; AAI45754." evidence="4" ref="2">
    <original>V</original>
    <variation>T</variation>
    <location>
        <position position="146"/>
    </location>
</feature>
<feature type="sequence conflict" description="In Ref. 2; AAI45754." evidence="4" ref="2">
    <location>
        <begin position="151"/>
        <end position="180"/>
    </location>
</feature>
<feature type="sequence conflict" description="In Ref. 1; BAB24427." evidence="4" ref="1">
    <original>S</original>
    <variation>Y</variation>
    <location>
        <position position="178"/>
    </location>
</feature>
<feature type="sequence conflict" description="In Ref. 2; AAI45754." evidence="4" ref="2">
    <original>N</original>
    <variation>T</variation>
    <location>
        <position position="299"/>
    </location>
</feature>
<evidence type="ECO:0000250" key="1">
    <source>
        <dbReference type="UniProtKB" id="Q53QW1"/>
    </source>
</evidence>
<evidence type="ECO:0000250" key="2">
    <source>
        <dbReference type="UniProtKB" id="Q5U2Y8"/>
    </source>
</evidence>
<evidence type="ECO:0000256" key="3">
    <source>
        <dbReference type="SAM" id="MobiDB-lite"/>
    </source>
</evidence>
<evidence type="ECO:0000305" key="4"/>
<sequence>MTAEPLEDPEASSSSTHDLPEASSDNTADENSADLPGESEGPDSLPDDVPPGDIDEVLAEHDVDQTSEAKAITTEQNEEQDFIRTDTFMRQDEDLLSKQISTITEKNVDQAYMQINTVFEQDKDQASIQTATLMGQDEDQAFLQIVTSVGQNKDQASIQTATLMGQDEDQASLQIATSVGQNKDQPSMQMDTSIGQDVEPAISTDTATSAVKDESPDIPHQGQDNPEETTSLLPQDPGILQVFVGFQNPVWDRLAENNRTSRSRTVSPSDSQTQEKTLGNPNVPEGQPVLVPNADVLSNLPEHVQTSVGAADPPPSDTSGRDPEPTPTTNSAKQEAEGFKALNPGSKARSPGLTSEDSAADSGIPPDPPDPGSPGGSPPHSPDFYQVALGRNLLDPNLYRPDVENDYMRSMTSLLGCGEGSISSLTDILVWSDTATRMGVAVGILASGCSSPADRLQDEGPRLRTVASLLRSARSAFSSGVMSGTGSALHSVTHLLESVERRTMEGIRSAMRYLAHHLTSRWARTGPSGN</sequence>
<organism>
    <name type="scientific">Mus musculus</name>
    <name type="common">Mouse</name>
    <dbReference type="NCBI Taxonomy" id="10090"/>
    <lineage>
        <taxon>Eukaryota</taxon>
        <taxon>Metazoa</taxon>
        <taxon>Chordata</taxon>
        <taxon>Craniata</taxon>
        <taxon>Vertebrata</taxon>
        <taxon>Euteleostomi</taxon>
        <taxon>Mammalia</taxon>
        <taxon>Eutheria</taxon>
        <taxon>Euarchontoglires</taxon>
        <taxon>Glires</taxon>
        <taxon>Rodentia</taxon>
        <taxon>Myomorpha</taxon>
        <taxon>Muroidea</taxon>
        <taxon>Muridae</taxon>
        <taxon>Murinae</taxon>
        <taxon>Mus</taxon>
        <taxon>Mus</taxon>
    </lineage>
</organism>